<reference key="1">
    <citation type="journal article" date="2006" name="Proc. Natl. Acad. Sci. U.S.A.">
        <title>Identification of genes subject to positive selection in uropathogenic strains of Escherichia coli: a comparative genomics approach.</title>
        <authorList>
            <person name="Chen S.L."/>
            <person name="Hung C.-S."/>
            <person name="Xu J."/>
            <person name="Reigstad C.S."/>
            <person name="Magrini V."/>
            <person name="Sabo A."/>
            <person name="Blasiar D."/>
            <person name="Bieri T."/>
            <person name="Meyer R.R."/>
            <person name="Ozersky P."/>
            <person name="Armstrong J.R."/>
            <person name="Fulton R.S."/>
            <person name="Latreille J.P."/>
            <person name="Spieth J."/>
            <person name="Hooton T.M."/>
            <person name="Mardis E.R."/>
            <person name="Hultgren S.J."/>
            <person name="Gordon J.I."/>
        </authorList>
    </citation>
    <scope>NUCLEOTIDE SEQUENCE [LARGE SCALE GENOMIC DNA]</scope>
    <source>
        <strain>UTI89 / UPEC</strain>
    </source>
</reference>
<gene>
    <name evidence="1" type="primary">hslV</name>
    <name type="ordered locus">UTI89_C4517</name>
</gene>
<dbReference type="EC" id="3.4.25.2" evidence="1"/>
<dbReference type="EMBL" id="CP000243">
    <property type="protein sequence ID" value="ABE09929.1"/>
    <property type="molecule type" value="Genomic_DNA"/>
</dbReference>
<dbReference type="RefSeq" id="WP_000208235.1">
    <property type="nucleotide sequence ID" value="NZ_CP064825.1"/>
</dbReference>
<dbReference type="SMR" id="Q1R3Y5"/>
<dbReference type="MEROPS" id="T01.006"/>
<dbReference type="KEGG" id="eci:UTI89_C4517"/>
<dbReference type="HOGENOM" id="CLU_093872_1_0_6"/>
<dbReference type="Proteomes" id="UP000001952">
    <property type="component" value="Chromosome"/>
</dbReference>
<dbReference type="GO" id="GO:0009376">
    <property type="term" value="C:HslUV protease complex"/>
    <property type="evidence" value="ECO:0007669"/>
    <property type="project" value="UniProtKB-UniRule"/>
</dbReference>
<dbReference type="GO" id="GO:0005839">
    <property type="term" value="C:proteasome core complex"/>
    <property type="evidence" value="ECO:0007669"/>
    <property type="project" value="InterPro"/>
</dbReference>
<dbReference type="GO" id="GO:0046872">
    <property type="term" value="F:metal ion binding"/>
    <property type="evidence" value="ECO:0007669"/>
    <property type="project" value="UniProtKB-KW"/>
</dbReference>
<dbReference type="GO" id="GO:0004298">
    <property type="term" value="F:threonine-type endopeptidase activity"/>
    <property type="evidence" value="ECO:0007669"/>
    <property type="project" value="UniProtKB-KW"/>
</dbReference>
<dbReference type="GO" id="GO:0051603">
    <property type="term" value="P:proteolysis involved in protein catabolic process"/>
    <property type="evidence" value="ECO:0007669"/>
    <property type="project" value="InterPro"/>
</dbReference>
<dbReference type="CDD" id="cd01913">
    <property type="entry name" value="protease_HslV"/>
    <property type="match status" value="1"/>
</dbReference>
<dbReference type="FunFam" id="3.60.20.10:FF:000002">
    <property type="entry name" value="ATP-dependent protease subunit HslV"/>
    <property type="match status" value="1"/>
</dbReference>
<dbReference type="Gene3D" id="3.60.20.10">
    <property type="entry name" value="Glutamine Phosphoribosylpyrophosphate, subunit 1, domain 1"/>
    <property type="match status" value="1"/>
</dbReference>
<dbReference type="HAMAP" id="MF_00248">
    <property type="entry name" value="HslV"/>
    <property type="match status" value="1"/>
</dbReference>
<dbReference type="InterPro" id="IPR022281">
    <property type="entry name" value="ATP-dep_Prtase_HsIV_su"/>
</dbReference>
<dbReference type="InterPro" id="IPR029055">
    <property type="entry name" value="Ntn_hydrolases_N"/>
</dbReference>
<dbReference type="InterPro" id="IPR001353">
    <property type="entry name" value="Proteasome_sua/b"/>
</dbReference>
<dbReference type="InterPro" id="IPR023333">
    <property type="entry name" value="Proteasome_suB-type"/>
</dbReference>
<dbReference type="NCBIfam" id="TIGR03692">
    <property type="entry name" value="ATP_dep_HslV"/>
    <property type="match status" value="1"/>
</dbReference>
<dbReference type="NCBIfam" id="NF003964">
    <property type="entry name" value="PRK05456.1"/>
    <property type="match status" value="1"/>
</dbReference>
<dbReference type="PANTHER" id="PTHR32194:SF0">
    <property type="entry name" value="ATP-DEPENDENT PROTEASE SUBUNIT HSLV"/>
    <property type="match status" value="1"/>
</dbReference>
<dbReference type="PANTHER" id="PTHR32194">
    <property type="entry name" value="METALLOPROTEASE TLDD"/>
    <property type="match status" value="1"/>
</dbReference>
<dbReference type="Pfam" id="PF00227">
    <property type="entry name" value="Proteasome"/>
    <property type="match status" value="1"/>
</dbReference>
<dbReference type="PIRSF" id="PIRSF039093">
    <property type="entry name" value="HslV"/>
    <property type="match status" value="1"/>
</dbReference>
<dbReference type="SUPFAM" id="SSF56235">
    <property type="entry name" value="N-terminal nucleophile aminohydrolases (Ntn hydrolases)"/>
    <property type="match status" value="1"/>
</dbReference>
<dbReference type="PROSITE" id="PS51476">
    <property type="entry name" value="PROTEASOME_BETA_2"/>
    <property type="match status" value="1"/>
</dbReference>
<sequence>MTTIVSVRRNGHVVIAGDGQATLGNTVMKGNVKKVRRLYNDKVIAGFAGGTADAFTLFELFERKLEMHQGHLIKAAVELAKDWRTDRMLRKLEALLAVADETASLIITGNGDVVQPENDLIAIGSGGPYAQAAARALLENTELSAREIAEKALDIAGDICIYTNHFHTIEELSYKA</sequence>
<evidence type="ECO:0000255" key="1">
    <source>
        <dbReference type="HAMAP-Rule" id="MF_00248"/>
    </source>
</evidence>
<proteinExistence type="inferred from homology"/>
<feature type="chain" id="PRO_1000012607" description="ATP-dependent protease subunit HslV">
    <location>
        <begin position="1"/>
        <end position="176"/>
    </location>
</feature>
<feature type="active site" evidence="1">
    <location>
        <position position="2"/>
    </location>
</feature>
<feature type="binding site" evidence="1">
    <location>
        <position position="157"/>
    </location>
    <ligand>
        <name>Na(+)</name>
        <dbReference type="ChEBI" id="CHEBI:29101"/>
    </ligand>
</feature>
<feature type="binding site" evidence="1">
    <location>
        <position position="160"/>
    </location>
    <ligand>
        <name>Na(+)</name>
        <dbReference type="ChEBI" id="CHEBI:29101"/>
    </ligand>
</feature>
<feature type="binding site" evidence="1">
    <location>
        <position position="163"/>
    </location>
    <ligand>
        <name>Na(+)</name>
        <dbReference type="ChEBI" id="CHEBI:29101"/>
    </ligand>
</feature>
<keyword id="KW-0021">Allosteric enzyme</keyword>
<keyword id="KW-0963">Cytoplasm</keyword>
<keyword id="KW-0378">Hydrolase</keyword>
<keyword id="KW-0479">Metal-binding</keyword>
<keyword id="KW-0645">Protease</keyword>
<keyword id="KW-0915">Sodium</keyword>
<keyword id="KW-0346">Stress response</keyword>
<keyword id="KW-0888">Threonine protease</keyword>
<organism>
    <name type="scientific">Escherichia coli (strain UTI89 / UPEC)</name>
    <dbReference type="NCBI Taxonomy" id="364106"/>
    <lineage>
        <taxon>Bacteria</taxon>
        <taxon>Pseudomonadati</taxon>
        <taxon>Pseudomonadota</taxon>
        <taxon>Gammaproteobacteria</taxon>
        <taxon>Enterobacterales</taxon>
        <taxon>Enterobacteriaceae</taxon>
        <taxon>Escherichia</taxon>
    </lineage>
</organism>
<name>HSLV_ECOUT</name>
<comment type="function">
    <text evidence="1">Protease subunit of a proteasome-like degradation complex believed to be a general protein degrading machinery.</text>
</comment>
<comment type="catalytic activity">
    <reaction evidence="1">
        <text>ATP-dependent cleavage of peptide bonds with broad specificity.</text>
        <dbReference type="EC" id="3.4.25.2"/>
    </reaction>
</comment>
<comment type="activity regulation">
    <text evidence="1">Allosterically activated by HslU binding.</text>
</comment>
<comment type="subunit">
    <text evidence="1">A double ring-shaped homohexamer of HslV is capped on each side by a ring-shaped HslU homohexamer. The assembly of the HslU/HslV complex is dependent on binding of ATP.</text>
</comment>
<comment type="subcellular location">
    <subcellularLocation>
        <location evidence="1">Cytoplasm</location>
    </subcellularLocation>
</comment>
<comment type="induction">
    <text evidence="1">By heat shock.</text>
</comment>
<comment type="similarity">
    <text evidence="1">Belongs to the peptidase T1B family. HslV subfamily.</text>
</comment>
<accession>Q1R3Y5</accession>
<protein>
    <recommendedName>
        <fullName evidence="1">ATP-dependent protease subunit HslV</fullName>
        <ecNumber evidence="1">3.4.25.2</ecNumber>
    </recommendedName>
    <alternativeName>
        <fullName evidence="1">Heat shock protein HslV</fullName>
    </alternativeName>
</protein>